<reference key="1">
    <citation type="journal article" date="2004" name="Proc. Natl. Acad. Sci. U.S.A.">
        <title>Genome sequence of the deep-sea gamma-proteobacterium Idiomarina loihiensis reveals amino acid fermentation as a source of carbon and energy.</title>
        <authorList>
            <person name="Hou S."/>
            <person name="Saw J.H."/>
            <person name="Lee K.S."/>
            <person name="Freitas T.A."/>
            <person name="Belisle C."/>
            <person name="Kawarabayasi Y."/>
            <person name="Donachie S.P."/>
            <person name="Pikina A."/>
            <person name="Galperin M.Y."/>
            <person name="Koonin E.V."/>
            <person name="Makarova K.S."/>
            <person name="Omelchenko M.V."/>
            <person name="Sorokin A."/>
            <person name="Wolf Y.I."/>
            <person name="Li Q.X."/>
            <person name="Keum Y.S."/>
            <person name="Campbell S."/>
            <person name="Denery J."/>
            <person name="Aizawa S."/>
            <person name="Shibata S."/>
            <person name="Malahoff A."/>
            <person name="Alam M."/>
        </authorList>
    </citation>
    <scope>NUCLEOTIDE SEQUENCE [LARGE SCALE GENOMIC DNA]</scope>
    <source>
        <strain>ATCC BAA-735 / DSM 15497 / L2-TR</strain>
    </source>
</reference>
<feature type="chain" id="PRO_0000224488" description="Valine--tRNA ligase">
    <location>
        <begin position="1"/>
        <end position="949"/>
    </location>
</feature>
<feature type="coiled-coil region" evidence="1">
    <location>
        <begin position="877"/>
        <end position="949"/>
    </location>
</feature>
<feature type="short sequence motif" description="'HIGH' region">
    <location>
        <begin position="40"/>
        <end position="50"/>
    </location>
</feature>
<feature type="short sequence motif" description="'KMSKS' region">
    <location>
        <begin position="553"/>
        <end position="557"/>
    </location>
</feature>
<feature type="binding site" evidence="1">
    <location>
        <position position="556"/>
    </location>
    <ligand>
        <name>ATP</name>
        <dbReference type="ChEBI" id="CHEBI:30616"/>
    </ligand>
</feature>
<organism>
    <name type="scientific">Idiomarina loihiensis (strain ATCC BAA-735 / DSM 15497 / L2-TR)</name>
    <dbReference type="NCBI Taxonomy" id="283942"/>
    <lineage>
        <taxon>Bacteria</taxon>
        <taxon>Pseudomonadati</taxon>
        <taxon>Pseudomonadota</taxon>
        <taxon>Gammaproteobacteria</taxon>
        <taxon>Alteromonadales</taxon>
        <taxon>Idiomarinaceae</taxon>
        <taxon>Idiomarina</taxon>
    </lineage>
</organism>
<protein>
    <recommendedName>
        <fullName evidence="1">Valine--tRNA ligase</fullName>
        <ecNumber evidence="1">6.1.1.9</ecNumber>
    </recommendedName>
    <alternativeName>
        <fullName evidence="1">Valyl-tRNA synthetase</fullName>
        <shortName evidence="1">ValRS</shortName>
    </alternativeName>
</protein>
<evidence type="ECO:0000255" key="1">
    <source>
        <dbReference type="HAMAP-Rule" id="MF_02004"/>
    </source>
</evidence>
<name>SYV_IDILO</name>
<keyword id="KW-0030">Aminoacyl-tRNA synthetase</keyword>
<keyword id="KW-0067">ATP-binding</keyword>
<keyword id="KW-0175">Coiled coil</keyword>
<keyword id="KW-0963">Cytoplasm</keyword>
<keyword id="KW-0436">Ligase</keyword>
<keyword id="KW-0547">Nucleotide-binding</keyword>
<keyword id="KW-0648">Protein biosynthesis</keyword>
<keyword id="KW-1185">Reference proteome</keyword>
<comment type="function">
    <text evidence="1">Catalyzes the attachment of valine to tRNA(Val). As ValRS can inadvertently accommodate and process structurally similar amino acids such as threonine, to avoid such errors, it has a 'posttransfer' editing activity that hydrolyzes mischarged Thr-tRNA(Val) in a tRNA-dependent manner.</text>
</comment>
<comment type="catalytic activity">
    <reaction evidence="1">
        <text>tRNA(Val) + L-valine + ATP = L-valyl-tRNA(Val) + AMP + diphosphate</text>
        <dbReference type="Rhea" id="RHEA:10704"/>
        <dbReference type="Rhea" id="RHEA-COMP:9672"/>
        <dbReference type="Rhea" id="RHEA-COMP:9708"/>
        <dbReference type="ChEBI" id="CHEBI:30616"/>
        <dbReference type="ChEBI" id="CHEBI:33019"/>
        <dbReference type="ChEBI" id="CHEBI:57762"/>
        <dbReference type="ChEBI" id="CHEBI:78442"/>
        <dbReference type="ChEBI" id="CHEBI:78537"/>
        <dbReference type="ChEBI" id="CHEBI:456215"/>
        <dbReference type="EC" id="6.1.1.9"/>
    </reaction>
</comment>
<comment type="subunit">
    <text evidence="1">Monomer.</text>
</comment>
<comment type="subcellular location">
    <subcellularLocation>
        <location evidence="1">Cytoplasm</location>
    </subcellularLocation>
</comment>
<comment type="domain">
    <text evidence="1">ValRS has two distinct active sites: one for aminoacylation and one for editing. The misactivated threonine is translocated from the active site to the editing site.</text>
</comment>
<comment type="domain">
    <text evidence="1">The C-terminal coiled-coil domain is crucial for aminoacylation activity.</text>
</comment>
<comment type="similarity">
    <text evidence="1">Belongs to the class-I aminoacyl-tRNA synthetase family. ValS type 1 subfamily.</text>
</comment>
<sequence>MDKTYSPAAIEQDLYQQWEDKGYFKPSGKGDPYSIMIPPPNVTGSLHMGHAFQHTIMDTLTRYQRMDGLNTLWQVGSDHAGIATQMVVERQLAAQGQTRQELGRDAFIDKIWEWKEQSGGTITQQMRRLGDSVDWDRERFTMDEGLSDAVREVFVKLHEDNLIYRGKRLVNWDPALQTAISDLEVENKEQQGYIWYLRYPLADGEKTEDGKDHLVVATTRPETMLGDVCVAVHPDDERFAHLVGKFLELPIVNRRIPIVADHHVDSEFGTGCVKVTPAHDFNDYEIGKRHQTGMISIFDDTAHVMAKAGLYTSTGETLEELNGFNGILPEQYAGKERFEARKQLVAEFDELGLLEKIEKHTNKIPYGDRGGVPIEPHLTDQWYVRVEPMAKQATAAVEDGRIEFVPKQYENMYFSWMRDIQDWCISRQLWWGHRIPAWYDEQGNVYVGRTEEEVREKHNLGDTPLQQDEDVLDTWFSSALWTFSTLGWPKNTEDLKTFHPTDVLVTGFDIIFFWVARMIMMTMHFMKDEEGQPQVPFKKVYVTGLIRDEEGQKMSKSKGNVLDPLDMIDGISADELVAKRTANLMQPKMREKIEKRTRKEFPEGITAHGTDALRFTLTALASTGRDINWDMKRLEGYRNFCNKLWNASRYVLMSTEEHDCGLENDDMTLSLADEWIIARFNSTVKDFRQALDTYRFDQAAAIAYEFTWNQFCDWYLELTKPVLQNGTESQQRGTRHTLVNVLEQLLRLLHPVMPYITETIWQRVKPLVGNTDDTIMLQPFPRVEDNVSHQAMQDMEWLKRVILAIRNIRGEMDLSPNKPLPLLLSNADAMAKGRIQNNESFLSSLAKLESIEFIESDDDAPASMTALVDTLKLHIPMAGLIDKEAELQRLQKSIEKANKEWQRLNGKLSNDNFVSKAPEAVIAKEREKLSEAETTLKQLQEQQDKIKAL</sequence>
<gene>
    <name evidence="1" type="primary">valS</name>
    <name type="ordered locus">IL1950</name>
</gene>
<accession>Q5QY15</accession>
<dbReference type="EC" id="6.1.1.9" evidence="1"/>
<dbReference type="EMBL" id="AE017340">
    <property type="protein sequence ID" value="AAV82782.1"/>
    <property type="molecule type" value="Genomic_DNA"/>
</dbReference>
<dbReference type="RefSeq" id="WP_011235178.1">
    <property type="nucleotide sequence ID" value="NC_006512.1"/>
</dbReference>
<dbReference type="SMR" id="Q5QY15"/>
<dbReference type="STRING" id="283942.IL1950"/>
<dbReference type="GeneID" id="41337140"/>
<dbReference type="KEGG" id="ilo:IL1950"/>
<dbReference type="eggNOG" id="COG0525">
    <property type="taxonomic scope" value="Bacteria"/>
</dbReference>
<dbReference type="HOGENOM" id="CLU_001493_0_2_6"/>
<dbReference type="OrthoDB" id="9810365at2"/>
<dbReference type="Proteomes" id="UP000001171">
    <property type="component" value="Chromosome"/>
</dbReference>
<dbReference type="GO" id="GO:0005829">
    <property type="term" value="C:cytosol"/>
    <property type="evidence" value="ECO:0007669"/>
    <property type="project" value="TreeGrafter"/>
</dbReference>
<dbReference type="GO" id="GO:0002161">
    <property type="term" value="F:aminoacyl-tRNA deacylase activity"/>
    <property type="evidence" value="ECO:0007669"/>
    <property type="project" value="InterPro"/>
</dbReference>
<dbReference type="GO" id="GO:0005524">
    <property type="term" value="F:ATP binding"/>
    <property type="evidence" value="ECO:0007669"/>
    <property type="project" value="UniProtKB-UniRule"/>
</dbReference>
<dbReference type="GO" id="GO:0004832">
    <property type="term" value="F:valine-tRNA ligase activity"/>
    <property type="evidence" value="ECO:0007669"/>
    <property type="project" value="UniProtKB-UniRule"/>
</dbReference>
<dbReference type="GO" id="GO:0006438">
    <property type="term" value="P:valyl-tRNA aminoacylation"/>
    <property type="evidence" value="ECO:0007669"/>
    <property type="project" value="UniProtKB-UniRule"/>
</dbReference>
<dbReference type="CDD" id="cd07962">
    <property type="entry name" value="Anticodon_Ia_Val"/>
    <property type="match status" value="1"/>
</dbReference>
<dbReference type="CDD" id="cd00817">
    <property type="entry name" value="ValRS_core"/>
    <property type="match status" value="1"/>
</dbReference>
<dbReference type="FunFam" id="1.10.287.380:FF:000001">
    <property type="entry name" value="Valine--tRNA ligase"/>
    <property type="match status" value="1"/>
</dbReference>
<dbReference type="FunFam" id="1.10.730.10:FF:000007">
    <property type="entry name" value="Valine--tRNA ligase"/>
    <property type="match status" value="1"/>
</dbReference>
<dbReference type="FunFam" id="3.40.50.620:FF:000032">
    <property type="entry name" value="Valine--tRNA ligase"/>
    <property type="match status" value="1"/>
</dbReference>
<dbReference type="FunFam" id="3.40.50.620:FF:000146">
    <property type="entry name" value="Valine--tRNA ligase"/>
    <property type="match status" value="1"/>
</dbReference>
<dbReference type="FunFam" id="3.90.740.10:FF:000003">
    <property type="entry name" value="Valine--tRNA ligase"/>
    <property type="match status" value="1"/>
</dbReference>
<dbReference type="Gene3D" id="3.40.50.620">
    <property type="entry name" value="HUPs"/>
    <property type="match status" value="2"/>
</dbReference>
<dbReference type="Gene3D" id="1.10.730.10">
    <property type="entry name" value="Isoleucyl-tRNA Synthetase, Domain 1"/>
    <property type="match status" value="1"/>
</dbReference>
<dbReference type="Gene3D" id="1.10.287.380">
    <property type="entry name" value="Valyl-tRNA synthetase, C-terminal domain"/>
    <property type="match status" value="1"/>
</dbReference>
<dbReference type="Gene3D" id="3.90.740.10">
    <property type="entry name" value="Valyl/Leucyl/Isoleucyl-tRNA synthetase, editing domain"/>
    <property type="match status" value="1"/>
</dbReference>
<dbReference type="HAMAP" id="MF_02004">
    <property type="entry name" value="Val_tRNA_synth_type1"/>
    <property type="match status" value="1"/>
</dbReference>
<dbReference type="InterPro" id="IPR001412">
    <property type="entry name" value="aa-tRNA-synth_I_CS"/>
</dbReference>
<dbReference type="InterPro" id="IPR002300">
    <property type="entry name" value="aa-tRNA-synth_Ia"/>
</dbReference>
<dbReference type="InterPro" id="IPR033705">
    <property type="entry name" value="Anticodon_Ia_Val"/>
</dbReference>
<dbReference type="InterPro" id="IPR013155">
    <property type="entry name" value="M/V/L/I-tRNA-synth_anticd-bd"/>
</dbReference>
<dbReference type="InterPro" id="IPR014729">
    <property type="entry name" value="Rossmann-like_a/b/a_fold"/>
</dbReference>
<dbReference type="InterPro" id="IPR010978">
    <property type="entry name" value="tRNA-bd_arm"/>
</dbReference>
<dbReference type="InterPro" id="IPR009080">
    <property type="entry name" value="tRNAsynth_Ia_anticodon-bd"/>
</dbReference>
<dbReference type="InterPro" id="IPR037118">
    <property type="entry name" value="Val-tRNA_synth_C_sf"/>
</dbReference>
<dbReference type="InterPro" id="IPR019499">
    <property type="entry name" value="Val-tRNA_synth_tRNA-bd"/>
</dbReference>
<dbReference type="InterPro" id="IPR009008">
    <property type="entry name" value="Val/Leu/Ile-tRNA-synth_edit"/>
</dbReference>
<dbReference type="InterPro" id="IPR002303">
    <property type="entry name" value="Valyl-tRNA_ligase"/>
</dbReference>
<dbReference type="NCBIfam" id="NF004349">
    <property type="entry name" value="PRK05729.1"/>
    <property type="match status" value="1"/>
</dbReference>
<dbReference type="NCBIfam" id="TIGR00422">
    <property type="entry name" value="valS"/>
    <property type="match status" value="1"/>
</dbReference>
<dbReference type="PANTHER" id="PTHR11946:SF93">
    <property type="entry name" value="VALINE--TRNA LIGASE, CHLOROPLASTIC_MITOCHONDRIAL 2"/>
    <property type="match status" value="1"/>
</dbReference>
<dbReference type="PANTHER" id="PTHR11946">
    <property type="entry name" value="VALYL-TRNA SYNTHETASES"/>
    <property type="match status" value="1"/>
</dbReference>
<dbReference type="Pfam" id="PF08264">
    <property type="entry name" value="Anticodon_1"/>
    <property type="match status" value="1"/>
</dbReference>
<dbReference type="Pfam" id="PF00133">
    <property type="entry name" value="tRNA-synt_1"/>
    <property type="match status" value="1"/>
</dbReference>
<dbReference type="Pfam" id="PF10458">
    <property type="entry name" value="Val_tRNA-synt_C"/>
    <property type="match status" value="1"/>
</dbReference>
<dbReference type="PRINTS" id="PR00986">
    <property type="entry name" value="TRNASYNTHVAL"/>
</dbReference>
<dbReference type="SUPFAM" id="SSF47323">
    <property type="entry name" value="Anticodon-binding domain of a subclass of class I aminoacyl-tRNA synthetases"/>
    <property type="match status" value="1"/>
</dbReference>
<dbReference type="SUPFAM" id="SSF52374">
    <property type="entry name" value="Nucleotidylyl transferase"/>
    <property type="match status" value="1"/>
</dbReference>
<dbReference type="SUPFAM" id="SSF46589">
    <property type="entry name" value="tRNA-binding arm"/>
    <property type="match status" value="1"/>
</dbReference>
<dbReference type="SUPFAM" id="SSF50677">
    <property type="entry name" value="ValRS/IleRS/LeuRS editing domain"/>
    <property type="match status" value="1"/>
</dbReference>
<dbReference type="PROSITE" id="PS00178">
    <property type="entry name" value="AA_TRNA_LIGASE_I"/>
    <property type="match status" value="1"/>
</dbReference>
<proteinExistence type="inferred from homology"/>